<evidence type="ECO:0000250" key="1"/>
<evidence type="ECO:0000255" key="2">
    <source>
        <dbReference type="PROSITE-ProRule" id="PRU00457"/>
    </source>
</evidence>
<evidence type="ECO:0000256" key="3">
    <source>
        <dbReference type="SAM" id="MobiDB-lite"/>
    </source>
</evidence>
<evidence type="ECO:0000305" key="4"/>
<organism>
    <name type="scientific">Saccharomyces cerevisiae (strain ATCC 204508 / S288c)</name>
    <name type="common">Baker's yeast</name>
    <dbReference type="NCBI Taxonomy" id="559292"/>
    <lineage>
        <taxon>Eukaryota</taxon>
        <taxon>Fungi</taxon>
        <taxon>Dikarya</taxon>
        <taxon>Ascomycota</taxon>
        <taxon>Saccharomycotina</taxon>
        <taxon>Saccharomycetes</taxon>
        <taxon>Saccharomycetales</taxon>
        <taxon>Saccharomycetaceae</taxon>
        <taxon>Saccharomyces</taxon>
    </lineage>
</organism>
<comment type="function">
    <text evidence="1">Capsid protein (CA) is the structural component of the virus-like particle (VLP), forming the shell that encapsulates the retrotransposons dimeric RNA genome. The particles are assembled from trimer-clustered units and there are holes in the capsid shells that allow for the diffusion of macromolecules. CA also has nucleocapsid-like chaperone activity, promoting primer tRNA(i)-Met annealing to the multipartite primer-binding site (PBS), dimerization of Ty2 RNA and initiation of reverse transcription (By similarity).</text>
</comment>
<comment type="function">
    <text evidence="1">The aspartyl protease (PR) mediates the proteolytic cleavages of the Gag and Gag-Pol polyproteins after assembly of the VLP.</text>
</comment>
<comment type="function">
    <text evidence="1">Reverse transcriptase/ribonuclease H (RT) is a multifunctional enzyme that catalyzes the conversion of the retro-elements RNA genome into dsDNA within the VLP. The enzyme displays a DNA polymerase activity that can copy either DNA or RNA templates, and a ribonuclease H (RNase H) activity that cleaves the RNA strand of RNA-DNA heteroduplexes during plus-strand synthesis and hydrolyzes RNA primers. The conversion leads to a linear dsDNA copy of the retrotransposon that includes long terminal repeats (LTRs) at both ends (By similarity).</text>
</comment>
<comment type="function">
    <text evidence="1">Integrase (IN) targets the VLP to the nucleus, where a subparticle preintegration complex (PIC) containing at least integrase and the newly synthesized dsDNA copy of the retrotransposon must transit the nuclear membrane. Once in the nucleus, integrase performs the integration of the dsDNA into the host genome (By similarity).</text>
</comment>
<comment type="catalytic activity">
    <reaction>
        <text>DNA(n) + a 2'-deoxyribonucleoside 5'-triphosphate = DNA(n+1) + diphosphate</text>
        <dbReference type="Rhea" id="RHEA:22508"/>
        <dbReference type="Rhea" id="RHEA-COMP:17339"/>
        <dbReference type="Rhea" id="RHEA-COMP:17340"/>
        <dbReference type="ChEBI" id="CHEBI:33019"/>
        <dbReference type="ChEBI" id="CHEBI:61560"/>
        <dbReference type="ChEBI" id="CHEBI:173112"/>
        <dbReference type="EC" id="2.7.7.49"/>
    </reaction>
</comment>
<comment type="catalytic activity">
    <reaction>
        <text>DNA(n) + a 2'-deoxyribonucleoside 5'-triphosphate = DNA(n+1) + diphosphate</text>
        <dbReference type="Rhea" id="RHEA:22508"/>
        <dbReference type="Rhea" id="RHEA-COMP:17339"/>
        <dbReference type="Rhea" id="RHEA-COMP:17340"/>
        <dbReference type="ChEBI" id="CHEBI:33019"/>
        <dbReference type="ChEBI" id="CHEBI:61560"/>
        <dbReference type="ChEBI" id="CHEBI:173112"/>
        <dbReference type="EC" id="2.7.7.7"/>
    </reaction>
</comment>
<comment type="catalytic activity">
    <reaction>
        <text>Endonucleolytic cleavage to 5'-phosphomonoester.</text>
        <dbReference type="EC" id="3.1.26.4"/>
    </reaction>
</comment>
<comment type="subunit">
    <text evidence="1">The capsid protein forms a homotrimer, from which the VLPs are assembled. The protease is a homodimer, whose active site consists of two apposed aspartic acid residues (By similarity).</text>
</comment>
<comment type="subcellular location">
    <subcellularLocation>
        <location>Cytoplasm</location>
    </subcellularLocation>
    <subcellularLocation>
        <location evidence="1">Nucleus</location>
    </subcellularLocation>
</comment>
<comment type="alternative products">
    <event type="ribosomal frameshifting"/>
    <isoform>
        <id>P25384-1</id>
        <name>Transposon Ty2-C Gag-Pol polyprotein</name>
        <sequence type="displayed"/>
    </isoform>
    <isoform>
        <id>P25383-1</id>
        <name>Transposon Ty2-C Gag polyprotein</name>
        <sequence type="external"/>
    </isoform>
    <text>The Gag-Pol polyprotein is generated by a +1 ribosomal frameshift.</text>
</comment>
<comment type="domain">
    <text evidence="1">The C-terminal RNA-binding region of CA is sufficient for all its nucleocapsid-like chaperone activities.</text>
</comment>
<comment type="domain">
    <text evidence="1">Integrase core domain contains the D-x(n)-D-x(35)-E motif, named for the phylogenetically conserved glutamic acid and aspartic acid residues and the invariant 35 amino acid spacing between the second and third acidic residues. Each acidic residue of the D,D(35)E motif is independently essential for the 3'-processing and strand transfer activities of purified integrase protein (By similarity).</text>
</comment>
<comment type="PTM">
    <text evidence="1">Initially, virus-like particles (VLPs) are composed of the structural unprocessed proteins Gag and Gag-Pol, and also contain the host initiator methionine tRNA (tRNA(i)-Met) which serves as a primer for minus-strand DNA synthesis, and a dimer of genomic Ty RNA. Processing of the polyproteins occurs within the particle and proceeds by an ordered pathway, called maturation. First, the protease (PR) is released by autocatalytic cleavage of the Gag-Pol polyprotein, and this cleavage is a prerequisite for subsequent processing at the remaining sites to release the mature structural and catalytic proteins. Maturation takes place prior to the RT reaction and is required to produce transposition-competent VLPs (By similarity).</text>
</comment>
<comment type="miscellaneous">
    <text>Retrotransposons are mobile genetic entities that are able to replicate via an RNA intermediate and a reverse transcription step. In contrast to retroviruses, retrotransposons are non-infectious, lack an envelope and remain intracellular. Ty2 retrotransposons belong to the copia elements (pseudoviridae).</text>
</comment>
<comment type="miscellaneous">
    <molecule>Isoform Transposon Ty2-C Gag-Pol polyprotein</molecule>
    <text>Produced by +1 ribosomal frameshifting between codon Leu-431 and Gly-432 of the YCL020W ORF.</text>
</comment>
<comment type="sequence caution" evidence="4">
    <conflict type="frameshift">
        <sequence resource="EMBL-CDS" id="CAA27458"/>
    </conflict>
</comment>
<feature type="chain" id="PRO_0000199562" description="Transposon Ty2-C Gag-Pol polyprotein">
    <location>
        <begin position="1"/>
        <end position="1770"/>
    </location>
</feature>
<feature type="chain" id="PRO_0000279278" description="Capsid protein" evidence="1">
    <location>
        <begin position="1"/>
        <end position="397"/>
    </location>
</feature>
<feature type="chain" id="PRO_0000279279" description="Ty2 protease" evidence="1">
    <location>
        <begin position="398"/>
        <end position="578"/>
    </location>
</feature>
<feature type="chain" id="PRO_0000279280" description="Integrase" evidence="1">
    <location>
        <begin position="579"/>
        <end position="1232"/>
    </location>
</feature>
<feature type="chain" id="PRO_0000279281" description="Reverse transcriptase/ribonuclease H" evidence="1">
    <location>
        <begin position="1233"/>
        <end position="1770"/>
    </location>
</feature>
<feature type="domain" description="Integrase catalytic" evidence="2">
    <location>
        <begin position="656"/>
        <end position="831"/>
    </location>
</feature>
<feature type="domain" description="Reverse transcriptase Ty1/copia-type">
    <location>
        <begin position="1353"/>
        <end position="1491"/>
    </location>
</feature>
<feature type="domain" description="RNase H Ty1/copia-type">
    <location>
        <begin position="1625"/>
        <end position="1767"/>
    </location>
</feature>
<feature type="region of interest" description="Disordered" evidence="3">
    <location>
        <begin position="1"/>
        <end position="88"/>
    </location>
</feature>
<feature type="region of interest" description="RNA-binding" evidence="1">
    <location>
        <begin position="295"/>
        <end position="397"/>
    </location>
</feature>
<feature type="region of interest" description="Disordered" evidence="3">
    <location>
        <begin position="355"/>
        <end position="453"/>
    </location>
</feature>
<feature type="region of interest" description="Integrase-type zinc finger-like">
    <location>
        <begin position="579"/>
        <end position="636"/>
    </location>
</feature>
<feature type="region of interest" description="Disordered" evidence="3">
    <location>
        <begin position="1003"/>
        <end position="1038"/>
    </location>
</feature>
<feature type="region of interest" description="Disordered" evidence="3">
    <location>
        <begin position="1057"/>
        <end position="1205"/>
    </location>
</feature>
<feature type="short sequence motif" description="Bipartite nuclear localization signal" evidence="1">
    <location>
        <begin position="1193"/>
        <end position="1227"/>
    </location>
</feature>
<feature type="compositionally biased region" description="Polar residues" evidence="3">
    <location>
        <begin position="1"/>
        <end position="11"/>
    </location>
</feature>
<feature type="compositionally biased region" description="Polar residues" evidence="3">
    <location>
        <begin position="19"/>
        <end position="39"/>
    </location>
</feature>
<feature type="compositionally biased region" description="Polar residues" evidence="3">
    <location>
        <begin position="49"/>
        <end position="60"/>
    </location>
</feature>
<feature type="compositionally biased region" description="Low complexity" evidence="3">
    <location>
        <begin position="369"/>
        <end position="382"/>
    </location>
</feature>
<feature type="compositionally biased region" description="Polar residues" evidence="3">
    <location>
        <begin position="399"/>
        <end position="408"/>
    </location>
</feature>
<feature type="compositionally biased region" description="Polar residues" evidence="3">
    <location>
        <begin position="415"/>
        <end position="435"/>
    </location>
</feature>
<feature type="compositionally biased region" description="Polar residues" evidence="3">
    <location>
        <begin position="1009"/>
        <end position="1024"/>
    </location>
</feature>
<feature type="compositionally biased region" description="Polar residues" evidence="3">
    <location>
        <begin position="1065"/>
        <end position="1082"/>
    </location>
</feature>
<feature type="active site" description="For protease activity; shared with dimeric partner" evidence="1">
    <location>
        <position position="457"/>
    </location>
</feature>
<feature type="binding site" evidence="2">
    <location>
        <position position="667"/>
    </location>
    <ligand>
        <name>Mg(2+)</name>
        <dbReference type="ChEBI" id="CHEBI:18420"/>
        <label>1</label>
        <note>catalytic; for integrase activity</note>
    </ligand>
</feature>
<feature type="binding site" evidence="2">
    <location>
        <position position="732"/>
    </location>
    <ligand>
        <name>Mg(2+)</name>
        <dbReference type="ChEBI" id="CHEBI:18420"/>
        <label>1</label>
        <note>catalytic; for integrase activity</note>
    </ligand>
</feature>
<feature type="binding site" evidence="2">
    <location>
        <position position="1361"/>
    </location>
    <ligand>
        <name>Mg(2+)</name>
        <dbReference type="ChEBI" id="CHEBI:18420"/>
        <label>2</label>
        <note>catalytic; for reverse transcriptase activity</note>
    </ligand>
</feature>
<feature type="binding site" evidence="2">
    <location>
        <position position="1442"/>
    </location>
    <ligand>
        <name>Mg(2+)</name>
        <dbReference type="ChEBI" id="CHEBI:18420"/>
        <label>2</label>
        <note>catalytic; for reverse transcriptase activity</note>
    </ligand>
</feature>
<feature type="binding site" evidence="2">
    <location>
        <position position="1443"/>
    </location>
    <ligand>
        <name>Mg(2+)</name>
        <dbReference type="ChEBI" id="CHEBI:18420"/>
        <label>2</label>
        <note>catalytic; for reverse transcriptase activity</note>
    </ligand>
</feature>
<feature type="binding site" evidence="2">
    <location>
        <position position="1625"/>
    </location>
    <ligand>
        <name>Mg(2+)</name>
        <dbReference type="ChEBI" id="CHEBI:18420"/>
        <label>3</label>
        <note>catalytic; for RNase H activity</note>
    </ligand>
</feature>
<feature type="binding site" evidence="2">
    <location>
        <position position="1667"/>
    </location>
    <ligand>
        <name>Mg(2+)</name>
        <dbReference type="ChEBI" id="CHEBI:18420"/>
        <label>3</label>
        <note>catalytic; for RNase H activity</note>
    </ligand>
</feature>
<feature type="binding site" evidence="2">
    <location>
        <position position="1700"/>
    </location>
    <ligand>
        <name>Mg(2+)</name>
        <dbReference type="ChEBI" id="CHEBI:18420"/>
        <label>3</label>
        <note>catalytic; for RNase H activity</note>
    </ligand>
</feature>
<feature type="site" description="Cleavage; by Ty2 protease" evidence="1">
    <location>
        <begin position="397"/>
        <end position="398"/>
    </location>
</feature>
<feature type="site" description="Cleavage; by Ty2 protease" evidence="1">
    <location>
        <begin position="578"/>
        <end position="579"/>
    </location>
</feature>
<feature type="site" description="Cleavage; by Ty2 protease" evidence="1">
    <location>
        <begin position="1232"/>
        <end position="1233"/>
    </location>
</feature>
<feature type="sequence conflict" description="In Ref. 1 and 2; CAA27458." evidence="4" ref="1 2">
    <original>A</original>
    <variation>R</variation>
    <location>
        <position position="460"/>
    </location>
</feature>
<feature type="sequence conflict" description="In Ref. 1 and 2; CAA27458." evidence="4" ref="1 2">
    <original>S</original>
    <variation>C</variation>
    <location>
        <position position="629"/>
    </location>
</feature>
<feature type="sequence conflict" description="In Ref. 1 and 2; CAA27458." evidence="4" ref="1 2">
    <original>S</original>
    <variation>SA</variation>
    <location>
        <position position="814"/>
    </location>
</feature>
<feature type="sequence conflict" description="In Ref. 1 and 2; CAA27458." evidence="4" ref="1 2">
    <original>AQ</original>
    <variation>LN</variation>
    <location>
        <begin position="1577"/>
        <end position="1578"/>
    </location>
</feature>
<accession>P25384</accession>
<accession>D6VQZ4</accession>
<accession>P87006</accession>
<dbReference type="EC" id="3.4.23.-"/>
<dbReference type="EC" id="2.7.7.49"/>
<dbReference type="EC" id="2.7.7.7"/>
<dbReference type="EC" id="3.1.26.4"/>
<dbReference type="EMBL" id="X03840">
    <property type="protein sequence ID" value="CAA27458.1"/>
    <property type="status" value="ALT_FRAME"/>
    <property type="molecule type" value="Genomic_DNA"/>
</dbReference>
<dbReference type="EMBL" id="X59720">
    <property type="protein sequence ID" value="CAA42365.2"/>
    <property type="molecule type" value="Genomic_DNA"/>
</dbReference>
<dbReference type="EMBL" id="BK006937">
    <property type="protein sequence ID" value="DAA07463.1"/>
    <property type="molecule type" value="Genomic_DNA"/>
</dbReference>
<dbReference type="PIR" id="B23496">
    <property type="entry name" value="B23496"/>
</dbReference>
<dbReference type="PIR" id="S53592">
    <property type="entry name" value="S53592"/>
</dbReference>
<dbReference type="RefSeq" id="NP_009909.2">
    <molecule id="P25384-1"/>
    <property type="nucleotide sequence ID" value="NM_001178666.2"/>
</dbReference>
<dbReference type="BioGRID" id="30964">
    <property type="interactions" value="20"/>
</dbReference>
<dbReference type="DIP" id="DIP-7333N"/>
<dbReference type="FunCoup" id="P25384">
    <property type="interactions" value="52"/>
</dbReference>
<dbReference type="IntAct" id="P25384">
    <property type="interactions" value="6"/>
</dbReference>
<dbReference type="MEROPS" id="A11.003"/>
<dbReference type="iPTMnet" id="P25384"/>
<dbReference type="PaxDb" id="4932-YCL019W"/>
<dbReference type="PeptideAtlas" id="P25384"/>
<dbReference type="GeneID" id="850340"/>
<dbReference type="KEGG" id="sce:YCL019W"/>
<dbReference type="AGR" id="SGD:S000000524"/>
<dbReference type="SGD" id="S000000524">
    <property type="gene designation" value="YCL019W"/>
</dbReference>
<dbReference type="VEuPathDB" id="FungiDB:YCL019W"/>
<dbReference type="eggNOG" id="KOG0017">
    <property type="taxonomic scope" value="Eukaryota"/>
</dbReference>
<dbReference type="HOGENOM" id="CLU_244151_0_0_1"/>
<dbReference type="InParanoid" id="P25384"/>
<dbReference type="OrthoDB" id="4046078at2759"/>
<dbReference type="Proteomes" id="UP000002311">
    <property type="component" value="Chromosome III"/>
</dbReference>
<dbReference type="RNAct" id="P25384">
    <property type="molecule type" value="protein"/>
</dbReference>
<dbReference type="GO" id="GO:0005737">
    <property type="term" value="C:cytoplasm"/>
    <property type="evidence" value="ECO:0007669"/>
    <property type="project" value="UniProtKB-SubCell"/>
</dbReference>
<dbReference type="GO" id="GO:0005634">
    <property type="term" value="C:nucleus"/>
    <property type="evidence" value="ECO:0000314"/>
    <property type="project" value="SGD"/>
</dbReference>
<dbReference type="GO" id="GO:0004190">
    <property type="term" value="F:aspartic-type endopeptidase activity"/>
    <property type="evidence" value="ECO:0007669"/>
    <property type="project" value="UniProtKB-KW"/>
</dbReference>
<dbReference type="GO" id="GO:0005524">
    <property type="term" value="F:ATP binding"/>
    <property type="evidence" value="ECO:0007669"/>
    <property type="project" value="UniProtKB-KW"/>
</dbReference>
<dbReference type="GO" id="GO:0003677">
    <property type="term" value="F:DNA binding"/>
    <property type="evidence" value="ECO:0007669"/>
    <property type="project" value="UniProtKB-KW"/>
</dbReference>
<dbReference type="GO" id="GO:0003887">
    <property type="term" value="F:DNA-directed DNA polymerase activity"/>
    <property type="evidence" value="ECO:0007669"/>
    <property type="project" value="UniProtKB-KW"/>
</dbReference>
<dbReference type="GO" id="GO:0003723">
    <property type="term" value="F:RNA binding"/>
    <property type="evidence" value="ECO:0007669"/>
    <property type="project" value="UniProtKB-KW"/>
</dbReference>
<dbReference type="GO" id="GO:0003964">
    <property type="term" value="F:RNA-directed DNA polymerase activity"/>
    <property type="evidence" value="ECO:0007669"/>
    <property type="project" value="UniProtKB-KW"/>
</dbReference>
<dbReference type="GO" id="GO:0004523">
    <property type="term" value="F:RNA-DNA hybrid ribonuclease activity"/>
    <property type="evidence" value="ECO:0007669"/>
    <property type="project" value="UniProtKB-EC"/>
</dbReference>
<dbReference type="GO" id="GO:0008270">
    <property type="term" value="F:zinc ion binding"/>
    <property type="evidence" value="ECO:0007669"/>
    <property type="project" value="UniProtKB-KW"/>
</dbReference>
<dbReference type="GO" id="GO:0015074">
    <property type="term" value="P:DNA integration"/>
    <property type="evidence" value="ECO:0007669"/>
    <property type="project" value="UniProtKB-KW"/>
</dbReference>
<dbReference type="GO" id="GO:0006310">
    <property type="term" value="P:DNA recombination"/>
    <property type="evidence" value="ECO:0007669"/>
    <property type="project" value="UniProtKB-KW"/>
</dbReference>
<dbReference type="GO" id="GO:0006508">
    <property type="term" value="P:proteolysis"/>
    <property type="evidence" value="ECO:0007669"/>
    <property type="project" value="UniProtKB-KW"/>
</dbReference>
<dbReference type="GO" id="GO:0032196">
    <property type="term" value="P:transposition"/>
    <property type="evidence" value="ECO:0007669"/>
    <property type="project" value="UniProtKB-KW"/>
</dbReference>
<dbReference type="GO" id="GO:0075523">
    <property type="term" value="P:viral translational frameshifting"/>
    <property type="evidence" value="ECO:0007669"/>
    <property type="project" value="UniProtKB-KW"/>
</dbReference>
<dbReference type="CDD" id="cd09272">
    <property type="entry name" value="RNase_HI_RT_Ty1"/>
    <property type="match status" value="1"/>
</dbReference>
<dbReference type="FunFam" id="3.30.420.10:FF:000050">
    <property type="entry name" value="Transposon Ty2-DR3 Gag-Pol polyprotein"/>
    <property type="match status" value="1"/>
</dbReference>
<dbReference type="Gene3D" id="3.30.420.10">
    <property type="entry name" value="Ribonuclease H-like superfamily/Ribonuclease H"/>
    <property type="match status" value="1"/>
</dbReference>
<dbReference type="InterPro" id="IPR043502">
    <property type="entry name" value="DNA/RNA_pol_sf"/>
</dbReference>
<dbReference type="InterPro" id="IPR001584">
    <property type="entry name" value="Integrase_cat-core"/>
</dbReference>
<dbReference type="InterPro" id="IPR054722">
    <property type="entry name" value="PolX-like_BBD"/>
</dbReference>
<dbReference type="InterPro" id="IPR039537">
    <property type="entry name" value="Retrotran_Ty1/copia-like"/>
</dbReference>
<dbReference type="InterPro" id="IPR012337">
    <property type="entry name" value="RNaseH-like_sf"/>
</dbReference>
<dbReference type="InterPro" id="IPR036397">
    <property type="entry name" value="RNaseH_sf"/>
</dbReference>
<dbReference type="InterPro" id="IPR013103">
    <property type="entry name" value="RVT_2"/>
</dbReference>
<dbReference type="InterPro" id="IPR015820">
    <property type="entry name" value="TYA"/>
</dbReference>
<dbReference type="PANTHER" id="PTHR42648">
    <property type="entry name" value="TRANSPOSASE, PUTATIVE-RELATED"/>
    <property type="match status" value="1"/>
</dbReference>
<dbReference type="PANTHER" id="PTHR42648:SF11">
    <property type="entry name" value="TRANSPOSON TY4-P GAG-POL POLYPROTEIN"/>
    <property type="match status" value="1"/>
</dbReference>
<dbReference type="Pfam" id="PF22936">
    <property type="entry name" value="Pol_BBD"/>
    <property type="match status" value="1"/>
</dbReference>
<dbReference type="Pfam" id="PF00665">
    <property type="entry name" value="rve"/>
    <property type="match status" value="1"/>
</dbReference>
<dbReference type="Pfam" id="PF07727">
    <property type="entry name" value="RVT_2"/>
    <property type="match status" value="1"/>
</dbReference>
<dbReference type="Pfam" id="PF01021">
    <property type="entry name" value="TYA"/>
    <property type="match status" value="1"/>
</dbReference>
<dbReference type="SUPFAM" id="SSF56672">
    <property type="entry name" value="DNA/RNA polymerases"/>
    <property type="match status" value="1"/>
</dbReference>
<dbReference type="SUPFAM" id="SSF53098">
    <property type="entry name" value="Ribonuclease H-like"/>
    <property type="match status" value="1"/>
</dbReference>
<dbReference type="PROSITE" id="PS50994">
    <property type="entry name" value="INTEGRASE"/>
    <property type="match status" value="1"/>
</dbReference>
<name>YC21B_YEAST</name>
<proteinExistence type="inferred from homology"/>
<protein>
    <recommendedName>
        <fullName>Transposon Ty2-C Gag-Pol polyprotein</fullName>
    </recommendedName>
    <alternativeName>
        <fullName>TY2A-TY2B</fullName>
    </alternativeName>
    <alternativeName>
        <fullName>Transposon Ty2 TYA-TYB polyprotein</fullName>
    </alternativeName>
    <component>
        <recommendedName>
            <fullName>Capsid protein</fullName>
            <shortName>CA</shortName>
        </recommendedName>
    </component>
    <component>
        <recommendedName>
            <fullName>Ty2 protease</fullName>
            <shortName>PR</shortName>
            <ecNumber>3.4.23.-</ecNumber>
        </recommendedName>
    </component>
    <component>
        <recommendedName>
            <fullName>Integrase</fullName>
            <shortName>IN</shortName>
        </recommendedName>
    </component>
    <component>
        <recommendedName>
            <fullName>Reverse transcriptase/ribonuclease H</fullName>
            <shortName>RT</shortName>
            <shortName>RT-RH</shortName>
            <ecNumber>2.7.7.49</ecNumber>
            <ecNumber>2.7.7.7</ecNumber>
            <ecNumber>3.1.26.4</ecNumber>
        </recommendedName>
    </component>
</protein>
<sequence>MESQQLHQNPRSLHGSAYASVTSKEVPSNQDPLAVSASNLPEFDRDSTKVNSQQETTPGTSAVPENHHHVSPQPASVPPPQNGQYQQHGMMTPNKAMASNWAHYQQPSMMTCSHYQTSPAYYQPDPHYPLPQYIPPLSTSSPDPIDSQNQHSEVPQAETKVRNNVLPPHTLTSEENFSTWVKFYIRFLKNSNLGDIIPNDQGEIKRQMTYEEHAYIYNTFQAFAPFHLLPTWVKQILEINYADILTVLCKSVSKMQTNNQELKDWIALANLEYDGSTSADTFEITVSTIIQRLKENNINVSDRLACQLILKGLSGDFKYLRNQYRTKTNMKLSQLFAEIQLIYDENKIMNLNKPSQYKQHSEYKNVSRTSPNTTNTKVTTRNYQRTNSSKPRAAKAHNIATSSKFSRVNNDHINESTVSSQYLSDDNELSLGQQQKESKPTHTIDSNDELPDHLLIDSGASQTLVRSAHYLHHATPNSEINIVDAQKQDIPINAIGNLHFNFQNGTKTSIKALHTPNIAYDLLSLSELANQNITACFTRNTLERSDGTVLAPIVKHGDFYWLSKKYLIPSHISKLTINNVNKSKSVNKYPYPLIHRMLGHANFRSIQKSLKKNAVTYLKESDIEWSNASTYQCPDCLIGKSTKHRHVKGSRLKYQESYEPFQYLHTDIFGPVHHLPKSAPSYFISFTDEKTRFQWVYPLHDRREESILNVFTSILAFIKNQFNARVLVIQMDRGSEYTNKTLHKFFTNRGITACYTTTADSRAHGVAERLNRTLLNDCRTLLHCSGLPNHLWFSAVEFSTIIRNSLVSPKNDKSARQHAGLAGLDITTILPFGQPVIVNNHNPDSKIHPRGIPGYALHPSRNSYGYIIYLPSLKKTVDTTNYVILQDKQSKLDQFNYDTLTFDDDLNRLTAHNQSFIEQNETEQSYDQNTESDHDYQSEIEINSDPLVNDFSSQSINPLQLDKEPVQKVRAPKEVDADISEYNILPSPVRSRTPHIINKESTEMGGTVESDTTSPRHSSTFTARNQKRPGSPNDMIDLTSQDRVNYGLENIKTTRLGGTEEPYIQRNSDTNIKYRTTNSTPSIDDRSSNSESTTPIISIETKAVCDNTPSIDTDPPEYRSSDHATPNIMPDKSSKNVTADSILDDLPLPDLTHQSPTDTSDVSKDIPHIHSRQTNSSLGGMDDSNVLTTTKSKKRSLEDNETEIEVSRDTWNNKNMRSLEPPRSKKRINLIAAIKGVKSIKPVRTTLRYDEAITYNKDNKEKDRYVEAYHKEISQLLKMNTWDTNKYYDRNDIDPKKVINSMFIFNKKRDGTHKARFVARGDIQHPDTYDSDMQSNTVHHYALMTSLSIALDNDYYITQLDISSAYLYADIKEELYIRPPPHLGLNDKLLRLRKSLYGLKQSGANWYETIKSYLINCCDMQEVRGWSCVFKNSQVTICLFVDDMILFSKDLNANKKIITTLKKQYDTKIINLGESDNEIQYDILGLEIKYQRSKYMKLGMEKSLTEKLPKLNVPLNPKGKKLRAPGQPGHYIDQDELEIDEDEYKEKVHEMQKLIGLASYVGYKFRFDLLYYINTLAQHILFPSRQVLDMTYELIQFMWDTRDKQLIWHKNKPTKPDNKLVAISDASYGNQPYYKSQIGNIFLLNGKVIGGKSTKASLTCTSTTEAEIHAVSEAIPLLNNLSHLVQELNKKPIIKGLLTDSRSTISIIKSTNEEKFRNRFFGTKAMRLRDEVSGNNLYVYYIETKKNIADVMTKPLPIKTFKLLTNKWIH</sequence>
<keyword id="KW-0064">Aspartyl protease</keyword>
<keyword id="KW-0067">ATP-binding</keyword>
<keyword id="KW-0963">Cytoplasm</keyword>
<keyword id="KW-0229">DNA integration</keyword>
<keyword id="KW-0233">DNA recombination</keyword>
<keyword id="KW-0238">DNA-binding</keyword>
<keyword id="KW-0239">DNA-directed DNA polymerase</keyword>
<keyword id="KW-0255">Endonuclease</keyword>
<keyword id="KW-0378">Hydrolase</keyword>
<keyword id="KW-0460">Magnesium</keyword>
<keyword id="KW-0479">Metal-binding</keyword>
<keyword id="KW-0511">Multifunctional enzyme</keyword>
<keyword id="KW-0540">Nuclease</keyword>
<keyword id="KW-0547">Nucleotide-binding</keyword>
<keyword id="KW-0548">Nucleotidyltransferase</keyword>
<keyword id="KW-0539">Nucleus</keyword>
<keyword id="KW-0645">Protease</keyword>
<keyword id="KW-1185">Reference proteome</keyword>
<keyword id="KW-0688">Ribosomal frameshifting</keyword>
<keyword id="KW-0694">RNA-binding</keyword>
<keyword id="KW-0695">RNA-directed DNA polymerase</keyword>
<keyword id="KW-0808">Transferase</keyword>
<keyword id="KW-0814">Transposable element</keyword>
<keyword id="KW-0815">Transposition</keyword>
<keyword id="KW-1188">Viral release from host cell</keyword>
<keyword id="KW-0917">Virion maturation</keyword>
<keyword id="KW-0862">Zinc</keyword>
<keyword id="KW-0863">Zinc-finger</keyword>
<reference key="1">
    <citation type="journal article" date="1986" name="Nucleic Acids Res.">
        <title>A 'hot-spot' for Ty transposition on the left arm of yeast chromosome III.</title>
        <authorList>
            <person name="Warmington J.R."/>
            <person name="Anwar R."/>
            <person name="Newlon C.S."/>
            <person name="Waring R.B."/>
            <person name="Davies R.W."/>
            <person name="Indge K.J."/>
            <person name="Oliver S.G."/>
        </authorList>
    </citation>
    <scope>NUCLEOTIDE SEQUENCE [GENOMIC DNA]</scope>
</reference>
<reference key="2">
    <citation type="journal article" date="1985" name="Nucleic Acids Res.">
        <title>Nucleotide sequence characterization of Ty 1-17, a class II transposon from yeast.</title>
        <authorList>
            <person name="Warmington J.R."/>
            <person name="Waring R.B."/>
            <person name="Newlon C.S."/>
            <person name="Indge K.J."/>
            <person name="Oliver S.G."/>
        </authorList>
    </citation>
    <scope>NUCLEOTIDE SEQUENCE [GENOMIC DNA]</scope>
</reference>
<reference key="3">
    <citation type="journal article" date="1992" name="Nature">
        <title>The complete DNA sequence of yeast chromosome III.</title>
        <authorList>
            <person name="Oliver S.G."/>
            <person name="van der Aart Q.J.M."/>
            <person name="Agostoni-Carbone M.L."/>
            <person name="Aigle M."/>
            <person name="Alberghina L."/>
            <person name="Alexandraki D."/>
            <person name="Antoine G."/>
            <person name="Anwar R."/>
            <person name="Ballesta J.P.G."/>
            <person name="Benit P."/>
            <person name="Berben G."/>
            <person name="Bergantino E."/>
            <person name="Biteau N."/>
            <person name="Bolle P.-A."/>
            <person name="Bolotin-Fukuhara M."/>
            <person name="Brown A."/>
            <person name="Brown A.J.P."/>
            <person name="Buhler J.-M."/>
            <person name="Carcano C."/>
            <person name="Carignani G."/>
            <person name="Cederberg H."/>
            <person name="Chanet R."/>
            <person name="Contreras R."/>
            <person name="Crouzet M."/>
            <person name="Daignan-Fornier B."/>
            <person name="Defoor E."/>
            <person name="Delgado M.D."/>
            <person name="Demolder J."/>
            <person name="Doira C."/>
            <person name="Dubois E."/>
            <person name="Dujon B."/>
            <person name="Duesterhoeft A."/>
            <person name="Erdmann D."/>
            <person name="Esteban M."/>
            <person name="Fabre F."/>
            <person name="Fairhead C."/>
            <person name="Faye G."/>
            <person name="Feldmann H."/>
            <person name="Fiers W."/>
            <person name="Francingues-Gaillard M.-C."/>
            <person name="Franco L."/>
            <person name="Frontali L."/>
            <person name="Fukuhara H."/>
            <person name="Fuller L.J."/>
            <person name="Galland P."/>
            <person name="Gent M.E."/>
            <person name="Gigot D."/>
            <person name="Gilliquet V."/>
            <person name="Glansdorff N."/>
            <person name="Goffeau A."/>
            <person name="Grenson M."/>
            <person name="Grisanti P."/>
            <person name="Grivell L.A."/>
            <person name="de Haan M."/>
            <person name="Haasemann M."/>
            <person name="Hatat D."/>
            <person name="Hoenicka J."/>
            <person name="Hegemann J.H."/>
            <person name="Herbert C.J."/>
            <person name="Hilger F."/>
            <person name="Hohmann S."/>
            <person name="Hollenberg C.P."/>
            <person name="Huse K."/>
            <person name="Iborra F."/>
            <person name="Indge K.J."/>
            <person name="Isono K."/>
            <person name="Jacq C."/>
            <person name="Jacquet M."/>
            <person name="James C.M."/>
            <person name="Jauniaux J.-C."/>
            <person name="Jia Y."/>
            <person name="Jimenez A."/>
            <person name="Kelly A."/>
            <person name="Kleinhans U."/>
            <person name="Kreisl P."/>
            <person name="Lanfranchi G."/>
            <person name="Lewis C."/>
            <person name="van der Linden C.G."/>
            <person name="Lucchini G."/>
            <person name="Lutzenkirchen K."/>
            <person name="Maat M.J."/>
            <person name="Mallet L."/>
            <person name="Mannhaupt G."/>
            <person name="Martegani E."/>
            <person name="Mathieu A."/>
            <person name="Maurer C.T.C."/>
            <person name="McConnell D."/>
            <person name="McKee R.A."/>
            <person name="Messenguy F."/>
            <person name="Mewes H.-W."/>
            <person name="Molemans F."/>
            <person name="Montague M.A."/>
            <person name="Muzi Falconi M."/>
            <person name="Navas L."/>
            <person name="Newlon C.S."/>
            <person name="Noone D."/>
            <person name="Pallier C."/>
            <person name="Panzeri L."/>
            <person name="Pearson B.M."/>
            <person name="Perea J."/>
            <person name="Philippsen P."/>
            <person name="Pierard A."/>
            <person name="Planta R.J."/>
            <person name="Plevani P."/>
            <person name="Poetsch B."/>
            <person name="Pohl F.M."/>
            <person name="Purnelle B."/>
            <person name="Ramezani Rad M."/>
            <person name="Rasmussen S.W."/>
            <person name="Raynal A."/>
            <person name="Remacha M.A."/>
            <person name="Richterich P."/>
            <person name="Roberts A.B."/>
            <person name="Rodriguez F."/>
            <person name="Sanz E."/>
            <person name="Schaaff-Gerstenschlaeger I."/>
            <person name="Scherens B."/>
            <person name="Schweitzer B."/>
            <person name="Shu Y."/>
            <person name="Skala J."/>
            <person name="Slonimski P.P."/>
            <person name="Sor F."/>
            <person name="Soustelle C."/>
            <person name="Spiegelberg R."/>
            <person name="Stateva L.I."/>
            <person name="Steensma H.Y."/>
            <person name="Steiner S."/>
            <person name="Thierry A."/>
            <person name="Thireos G."/>
            <person name="Tzermia M."/>
            <person name="Urrestarazu L.A."/>
            <person name="Valle G."/>
            <person name="Vetter I."/>
            <person name="van Vliet-Reedijk J.C."/>
            <person name="Voet M."/>
            <person name="Volckaert G."/>
            <person name="Vreken P."/>
            <person name="Wang H."/>
            <person name="Warmington J.R."/>
            <person name="von Wettstein D."/>
            <person name="Wicksteed B.L."/>
            <person name="Wilson C."/>
            <person name="Wurst H."/>
            <person name="Xu G."/>
            <person name="Yoshikawa A."/>
            <person name="Zimmermann F.K."/>
            <person name="Sgouros J.G."/>
        </authorList>
    </citation>
    <scope>NUCLEOTIDE SEQUENCE [LARGE SCALE GENOMIC DNA]</scope>
    <source>
        <strain>ATCC 204508 / S288c</strain>
    </source>
</reference>
<reference key="4">
    <citation type="submission" date="1996-01" db="EMBL/GenBank/DDBJ databases">
        <authorList>
            <person name="Gromadka R."/>
        </authorList>
    </citation>
    <scope>SEQUENCE REVISION</scope>
</reference>
<reference key="5">
    <citation type="journal article" date="2014" name="G3 (Bethesda)">
        <title>The reference genome sequence of Saccharomyces cerevisiae: Then and now.</title>
        <authorList>
            <person name="Engel S.R."/>
            <person name="Dietrich F.S."/>
            <person name="Fisk D.G."/>
            <person name="Binkley G."/>
            <person name="Balakrishnan R."/>
            <person name="Costanzo M.C."/>
            <person name="Dwight S.S."/>
            <person name="Hitz B.C."/>
            <person name="Karra K."/>
            <person name="Nash R.S."/>
            <person name="Weng S."/>
            <person name="Wong E.D."/>
            <person name="Lloyd P."/>
            <person name="Skrzypek M.S."/>
            <person name="Miyasato S.R."/>
            <person name="Simison M."/>
            <person name="Cherry J.M."/>
        </authorList>
    </citation>
    <scope>GENOME REANNOTATION</scope>
    <source>
        <strain>ATCC 204508 / S288c</strain>
    </source>
</reference>
<reference key="6">
    <citation type="journal article" date="1998" name="Genome Res.">
        <title>Transposable elements and genome organization: a comprehensive survey of retrotransposons revealed by the complete Saccharomyces cerevisiae genome sequence.</title>
        <authorList>
            <person name="Kim J.M."/>
            <person name="Vanguri S."/>
            <person name="Boeke J.D."/>
            <person name="Gabriel A."/>
            <person name="Voytas D.F."/>
        </authorList>
    </citation>
    <scope>NOMENCLATURE</scope>
</reference>
<reference key="7">
    <citation type="journal article" date="2005" name="Cytogenet. Genome Res.">
        <title>Happy together: the life and times of Ty retrotransposons and their hosts.</title>
        <authorList>
            <person name="Lesage P."/>
            <person name="Todeschini A.L."/>
        </authorList>
    </citation>
    <scope>REVIEW</scope>
</reference>
<gene>
    <name type="primary">TY2B-C</name>
    <name type="synonym">YCLWTy2-1 POL</name>
    <name type="ordered locus">YCL019W</name>
    <name type="ORF">YCL19W</name>
</gene>